<name>IKKE1_CAEEL</name>
<gene>
    <name evidence="7" type="primary">ikke-1</name>
    <name evidence="7" type="ORF">R107.4</name>
</gene>
<keyword id="KW-0025">Alternative splicing</keyword>
<keyword id="KW-0067">ATP-binding</keyword>
<keyword id="KW-0072">Autophagy</keyword>
<keyword id="KW-0963">Cytoplasm</keyword>
<keyword id="KW-0418">Kinase</keyword>
<keyword id="KW-0547">Nucleotide-binding</keyword>
<keyword id="KW-1185">Reference proteome</keyword>
<keyword id="KW-0723">Serine/threonine-protein kinase</keyword>
<keyword id="KW-0808">Transferase</keyword>
<evidence type="ECO:0000255" key="1">
    <source>
        <dbReference type="PROSITE-ProRule" id="PRU00159"/>
    </source>
</evidence>
<evidence type="ECO:0000255" key="2">
    <source>
        <dbReference type="PROSITE-ProRule" id="PRU10027"/>
    </source>
</evidence>
<evidence type="ECO:0000256" key="3">
    <source>
        <dbReference type="SAM" id="MobiDB-lite"/>
    </source>
</evidence>
<evidence type="ECO:0000269" key="4">
    <source>
    </source>
</evidence>
<evidence type="ECO:0000305" key="5"/>
<evidence type="ECO:0000312" key="6">
    <source>
        <dbReference type="WormBase" id="R107.4a"/>
    </source>
</evidence>
<evidence type="ECO:0000312" key="7">
    <source>
        <dbReference type="WormBase" id="R107.4b"/>
    </source>
</evidence>
<evidence type="ECO:0000312" key="8">
    <source>
        <dbReference type="WormBase" id="R107.4c"/>
    </source>
</evidence>
<evidence type="ECO:0000312" key="9">
    <source>
        <dbReference type="WormBase" id="R107.4d"/>
    </source>
</evidence>
<comment type="function">
    <text evidence="4">Serine/threonine-protein kinase, which plays a role in regulating allophagy, an autophagic process in which paternal organelles, including mitochondria and membranous organelles, are degraded in embryos. Phosphorylates the allophagy receptor allo-1, which is required for allophagy.</text>
</comment>
<comment type="catalytic activity">
    <reaction evidence="1">
        <text>L-seryl-[protein] + ATP = O-phospho-L-seryl-[protein] + ADP + H(+)</text>
        <dbReference type="Rhea" id="RHEA:17989"/>
        <dbReference type="Rhea" id="RHEA-COMP:9863"/>
        <dbReference type="Rhea" id="RHEA-COMP:11604"/>
        <dbReference type="ChEBI" id="CHEBI:15378"/>
        <dbReference type="ChEBI" id="CHEBI:29999"/>
        <dbReference type="ChEBI" id="CHEBI:30616"/>
        <dbReference type="ChEBI" id="CHEBI:83421"/>
        <dbReference type="ChEBI" id="CHEBI:456216"/>
        <dbReference type="EC" id="2.7.11.1"/>
    </reaction>
</comment>
<comment type="catalytic activity">
    <reaction evidence="1">
        <text>L-threonyl-[protein] + ATP = O-phospho-L-threonyl-[protein] + ADP + H(+)</text>
        <dbReference type="Rhea" id="RHEA:46608"/>
        <dbReference type="Rhea" id="RHEA-COMP:11060"/>
        <dbReference type="Rhea" id="RHEA-COMP:11605"/>
        <dbReference type="ChEBI" id="CHEBI:15378"/>
        <dbReference type="ChEBI" id="CHEBI:30013"/>
        <dbReference type="ChEBI" id="CHEBI:30616"/>
        <dbReference type="ChEBI" id="CHEBI:61977"/>
        <dbReference type="ChEBI" id="CHEBI:456216"/>
        <dbReference type="EC" id="2.7.11.1"/>
    </reaction>
</comment>
<comment type="subunit">
    <text evidence="4">Interacts with allo-1 (via N-terminus); the interaction is direct.</text>
</comment>
<comment type="subcellular location">
    <subcellularLocation>
        <location evidence="4">Cytoplasm</location>
    </subcellularLocation>
    <text evidence="4">Localizes to cytoplasmic puncta in oocytes. After fertilization, localizes to paternal organelles during meiosis I and meiosis II. Co-localizes with allo-1 in embryos and oocytes.</text>
</comment>
<comment type="alternative products">
    <event type="alternative splicing"/>
    <isoform>
        <id>P32742-1</id>
        <name evidence="7">b</name>
        <sequence type="displayed"/>
    </isoform>
    <isoform>
        <id>P32742-2</id>
        <name evidence="6">a</name>
        <sequence type="described" ref="VSP_004902 VSP_004904"/>
    </isoform>
    <isoform>
        <id>P32742-3</id>
        <name evidence="8">c</name>
        <sequence type="described" ref="VSP_004903"/>
    </isoform>
    <isoform>
        <id>P32742-4</id>
        <name evidence="9">d</name>
        <sequence type="described" ref="VSP_004903 VSP_059587"/>
    </isoform>
</comment>
<comment type="tissue specificity">
    <text evidence="4">Expressed in oocytes.</text>
</comment>
<comment type="disruption phenotype">
    <text evidence="4">RNAi-mediated knockdown results in defective clearance of paternal mitochondria and impaired accumulation of the autophagosome marker lgg-1 in 1-cell stage embryos.</text>
</comment>
<comment type="similarity">
    <text evidence="1">Belongs to the protein kinase superfamily. Ser/Thr protein kinase family.</text>
</comment>
<reference key="1">
    <citation type="journal article" date="1994" name="Nature">
        <title>2.2 Mb of contiguous nucleotide sequence from chromosome III of C. elegans.</title>
        <authorList>
            <person name="Wilson R."/>
            <person name="Ainscough R."/>
            <person name="Anderson K."/>
            <person name="Baynes C."/>
            <person name="Berks M."/>
            <person name="Bonfield J."/>
            <person name="Burton J."/>
            <person name="Connell M."/>
            <person name="Copsey T."/>
            <person name="Cooper J."/>
            <person name="Coulson A."/>
            <person name="Craxton M."/>
            <person name="Dear S."/>
            <person name="Du Z."/>
            <person name="Durbin R."/>
            <person name="Favello A."/>
            <person name="Fraser A."/>
            <person name="Fulton L."/>
            <person name="Gardner A."/>
            <person name="Green P."/>
            <person name="Hawkins T."/>
            <person name="Hillier L."/>
            <person name="Jier M."/>
            <person name="Johnston L."/>
            <person name="Jones M."/>
            <person name="Kershaw J."/>
            <person name="Kirsten J."/>
            <person name="Laisster N."/>
            <person name="Latreille P."/>
            <person name="Lightning J."/>
            <person name="Lloyd C."/>
            <person name="Mortimore B."/>
            <person name="O'Callaghan M."/>
            <person name="Parsons J."/>
            <person name="Percy C."/>
            <person name="Rifken L."/>
            <person name="Roopra A."/>
            <person name="Saunders D."/>
            <person name="Shownkeen R."/>
            <person name="Sims M."/>
            <person name="Smaldon N."/>
            <person name="Smith A."/>
            <person name="Smith M."/>
            <person name="Sonnhammer E."/>
            <person name="Staden R."/>
            <person name="Sulston J."/>
            <person name="Thierry-Mieg J."/>
            <person name="Thomas K."/>
            <person name="Vaudin M."/>
            <person name="Vaughan K."/>
            <person name="Waterston R."/>
            <person name="Watson A."/>
            <person name="Weinstock L."/>
            <person name="Wilkinson-Sproat J."/>
            <person name="Wohldman P."/>
        </authorList>
    </citation>
    <scope>NUCLEOTIDE SEQUENCE [LARGE SCALE GENOMIC DNA]</scope>
    <source>
        <strain>Bristol N2</strain>
    </source>
</reference>
<reference key="2">
    <citation type="journal article" date="1998" name="Science">
        <title>Genome sequence of the nematode C. elegans: a platform for investigating biology.</title>
        <authorList>
            <consortium name="The C. elegans sequencing consortium"/>
        </authorList>
    </citation>
    <scope>NUCLEOTIDE SEQUENCE [LARGE SCALE GENOMIC DNA]</scope>
    <source>
        <strain>Bristol N2</strain>
    </source>
</reference>
<reference key="3">
    <citation type="journal article" date="2018" name="Nat. Cell Biol.">
        <title>The autophagy receptor ALLO-1 and the IKKE-1 kinase control clearance of paternal mitochondria in Caenorhabditis elegans.</title>
        <authorList>
            <person name="Sato M."/>
            <person name="Sato K."/>
            <person name="Tomura K."/>
            <person name="Kosako H."/>
            <person name="Sato K."/>
        </authorList>
    </citation>
    <scope>FUNCTION</scope>
    <scope>IDENTIFICATION BY MASS SPECTROMETRY</scope>
    <scope>INTERACTION WITH ALLO-1</scope>
    <scope>SUBCELLULAR LOCATION</scope>
    <scope>TISSUE SPECIFICITY</scope>
    <scope>DISRUPTION PHENOTYPE</scope>
    <scope>MUTAGENESIS OF LYS-49; 126-LEU--CYS-318 AND 131-VAL--ALA-264</scope>
</reference>
<protein>
    <recommendedName>
        <fullName evidence="7">Inhibitor of nuclear factor kappa-B kinase epsilon subunit homolog 1</fullName>
        <ecNumber evidence="1">2.7.11.1</ecNumber>
    </recommendedName>
</protein>
<sequence>MAVSPHKTYPIVITHGEKYTLFNDESIGKGAYSEVYRGRTESGRLVAVKTACKKLEVAAIGIEIEILKKLKGASNIVQYFGSNHTKMAPGSVTSETISFAMEYASSSLEAEMRRPKNHRGLSSNALIDLVVDCSMALSALREHNIAHRDIKHMNILLFPGTPTRGRRSTHLFKLCDMGCSKSLSENSSHEMRTLVGTPNLLHPFLAHEMVDPLMAQNRHNWKTKSAYTSEQCDLWALGCTLYFCATGKFPFEHERNNKSLYHKAVVALTQNPDAIAMVLVQKGRDPGRRTDIFEFQPVTELPAKFTRYPKWLVSTMTCLLRSFFHEPSIEYYAKVADAMRNSKRRTFSSVDQMSIVEHTDMSNVPHLGFSIPSISKCLGYPEGTDILLLSNTSTHYLDSKQKSVDGLPDDLYLVVPQTSHVDMRKILARNIEFHEFDDMTDRKLSEIRIKKCYEGLSMLTEIDEYLALFDRVSTILSTQFSLLVQELSQFERVQTASRFAVYVDMASVPLMLFDEANPETKMISDQCIQQAKRAREELERHAKVSMDIEACAKQLSKDAEDLRLEDMDLPGICEEIESYVFYDKQAILSTQKYSQELVELCLKRRNNIMEQIFNSPDRINKSKLNKAMNLAASLSQLRSNYRKLQDMISECVDLLEKPFQEMKDTVNRYLQAQGCSRNTMQKSMHLLRPEFHESQIRIKKTTKSCRKLIDQLNIELDQLGFVRLGDILIKAESEQTLTRSEEIQETQVVSFFCQAESSPNKEQFPKPEQDSILESSIDEGSTSFESTPPSSPPDVGSNNYFQAVFQYFAKPTSSPSSSAK</sequence>
<feature type="chain" id="PRO_0000086831" description="Inhibitor of nuclear factor kappa-B kinase epsilon subunit homolog 1">
    <location>
        <begin position="1"/>
        <end position="820"/>
    </location>
</feature>
<feature type="domain" description="Protein kinase" evidence="1">
    <location>
        <begin position="21"/>
        <end position="299"/>
    </location>
</feature>
<feature type="region of interest" description="Disordered" evidence="3">
    <location>
        <begin position="758"/>
        <end position="798"/>
    </location>
</feature>
<feature type="active site" description="Proton acceptor" evidence="1 2">
    <location>
        <position position="149"/>
    </location>
</feature>
<feature type="binding site" evidence="1">
    <location>
        <begin position="27"/>
        <end position="35"/>
    </location>
    <ligand>
        <name>ATP</name>
        <dbReference type="ChEBI" id="CHEBI:30616"/>
    </ligand>
</feature>
<feature type="binding site" evidence="1">
    <location>
        <position position="49"/>
    </location>
    <ligand>
        <name>ATP</name>
        <dbReference type="ChEBI" id="CHEBI:30616"/>
    </ligand>
</feature>
<feature type="splice variant" id="VSP_004902" description="In isoform a." evidence="5">
    <original>FFCQ</original>
    <variation>RVIN</variation>
    <location>
        <begin position="751"/>
        <end position="754"/>
    </location>
</feature>
<feature type="splice variant" id="VSP_004903" description="In isoform c and isoform d." evidence="5">
    <location>
        <begin position="751"/>
        <end position="754"/>
    </location>
</feature>
<feature type="splice variant" id="VSP_004904" description="In isoform a." evidence="5">
    <location>
        <begin position="755"/>
        <end position="820"/>
    </location>
</feature>
<feature type="splice variant" id="VSP_059587" description="In isoform d." evidence="5">
    <original>ESSIDEGSTSFESTPPSSPPDVGSNNYFQAVFQYFAKPTSSPSSSAK</original>
    <variation>TKKMERIFKKKRRENGNEGGDNDVCRICCENERQEKREKKRKSSGRRH</variation>
    <location>
        <begin position="774"/>
        <end position="820"/>
    </location>
</feature>
<feature type="mutagenesis site" description="Localizes to paternal organelles and interacts with allo-1 in embryos, but does not rescue the paternal mitochondrial clearance defect in the ikke-1 gk1264 mutant." evidence="4">
    <original>K</original>
    <variation>M</variation>
    <location>
        <position position="49"/>
    </location>
</feature>
<feature type="mutagenesis site" description="In gk1246; results in defective clearance of paternal mitochondria in 1-cell stage embryos, and impaired accumulation of the autophagosome marker lgg-1 in 1-cell stage embryos and oocytes." evidence="4">
    <location>
        <begin position="126"/>
        <end position="318"/>
    </location>
</feature>
<feature type="mutagenesis site" description="In tm4102; results in defective clearance of paternal mitochondria and impaired accumulation of the autophagosome marker lgg-1 in 1-cell stage embryos." evidence="4">
    <location>
        <begin position="131"/>
        <end position="264"/>
    </location>
</feature>
<organism>
    <name type="scientific">Caenorhabditis elegans</name>
    <dbReference type="NCBI Taxonomy" id="6239"/>
    <lineage>
        <taxon>Eukaryota</taxon>
        <taxon>Metazoa</taxon>
        <taxon>Ecdysozoa</taxon>
        <taxon>Nematoda</taxon>
        <taxon>Chromadorea</taxon>
        <taxon>Rhabditida</taxon>
        <taxon>Rhabditina</taxon>
        <taxon>Rhabditomorpha</taxon>
        <taxon>Rhabditoidea</taxon>
        <taxon>Rhabditidae</taxon>
        <taxon>Peloderinae</taxon>
        <taxon>Caenorhabditis</taxon>
    </lineage>
</organism>
<accession>P32742</accession>
<accession>P32741</accession>
<accession>Q5FC85</accession>
<dbReference type="EC" id="2.7.11.1" evidence="1"/>
<dbReference type="EMBL" id="BX284603">
    <property type="protein sequence ID" value="CAA78473.3"/>
    <property type="molecule type" value="Genomic_DNA"/>
</dbReference>
<dbReference type="EMBL" id="BX284603">
    <property type="protein sequence ID" value="CAD45599.1"/>
    <property type="molecule type" value="Genomic_DNA"/>
</dbReference>
<dbReference type="EMBL" id="BX284603">
    <property type="protein sequence ID" value="CAD45600.1"/>
    <property type="molecule type" value="Genomic_DNA"/>
</dbReference>
<dbReference type="EMBL" id="BX284603">
    <property type="protein sequence ID" value="CAI46627.1"/>
    <property type="molecule type" value="Genomic_DNA"/>
</dbReference>
<dbReference type="PIR" id="C88546">
    <property type="entry name" value="C88546"/>
</dbReference>
<dbReference type="PIR" id="S30874">
    <property type="entry name" value="S30874"/>
</dbReference>
<dbReference type="RefSeq" id="NP_001022708.1">
    <property type="nucleotide sequence ID" value="NM_001027537.3"/>
</dbReference>
<dbReference type="RefSeq" id="NP_001359523.1">
    <molecule id="P32742-2"/>
    <property type="nucleotide sequence ID" value="NM_001372639.1"/>
</dbReference>
<dbReference type="RefSeq" id="NP_001379435.1">
    <molecule id="P32742-4"/>
    <property type="nucleotide sequence ID" value="NM_001392170.1"/>
</dbReference>
<dbReference type="RefSeq" id="NP_499002.2">
    <property type="nucleotide sequence ID" value="NM_066601.5"/>
</dbReference>
<dbReference type="RefSeq" id="NP_871627.1">
    <molecule id="P32742-1"/>
    <property type="nucleotide sequence ID" value="NM_181898.4"/>
</dbReference>
<dbReference type="RefSeq" id="NP_871628.1">
    <molecule id="P32742-3"/>
    <property type="nucleotide sequence ID" value="NM_181899.7"/>
</dbReference>
<dbReference type="BioGRID" id="41477">
    <property type="interactions" value="2"/>
</dbReference>
<dbReference type="FunCoup" id="P32742">
    <property type="interactions" value="718"/>
</dbReference>
<dbReference type="IntAct" id="P32742">
    <property type="interactions" value="1"/>
</dbReference>
<dbReference type="STRING" id="6239.R107.4b.1"/>
<dbReference type="PaxDb" id="6239-R107.4b"/>
<dbReference type="PeptideAtlas" id="P32742"/>
<dbReference type="EnsemblMetazoa" id="R107.4a.1">
    <molecule id="P32742-2"/>
    <property type="protein sequence ID" value="R107.4a.1"/>
    <property type="gene ID" value="WBGene00011299"/>
</dbReference>
<dbReference type="EnsemblMetazoa" id="R107.4a.2">
    <molecule id="P32742-2"/>
    <property type="protein sequence ID" value="R107.4a.2"/>
    <property type="gene ID" value="WBGene00011299"/>
</dbReference>
<dbReference type="EnsemblMetazoa" id="R107.4b.1">
    <molecule id="P32742-1"/>
    <property type="protein sequence ID" value="R107.4b.1"/>
    <property type="gene ID" value="WBGene00011299"/>
</dbReference>
<dbReference type="EnsemblMetazoa" id="R107.4c.1">
    <molecule id="P32742-3"/>
    <property type="protein sequence ID" value="R107.4c.1"/>
    <property type="gene ID" value="WBGene00011299"/>
</dbReference>
<dbReference type="EnsemblMetazoa" id="R107.4d.1">
    <molecule id="P32742-4"/>
    <property type="protein sequence ID" value="R107.4d.1"/>
    <property type="gene ID" value="WBGene00011299"/>
</dbReference>
<dbReference type="GeneID" id="176278"/>
<dbReference type="KEGG" id="cel:CELE_R107.4"/>
<dbReference type="UCSC" id="R107.4a">
    <property type="organism name" value="c. elegans"/>
</dbReference>
<dbReference type="AGR" id="WB:WBGene00011299"/>
<dbReference type="CTD" id="176278"/>
<dbReference type="WormBase" id="R107.4a">
    <molecule id="P32742-2"/>
    <property type="protein sequence ID" value="CE31817"/>
    <property type="gene ID" value="WBGene00011299"/>
    <property type="gene designation" value="ikke-1"/>
</dbReference>
<dbReference type="WormBase" id="R107.4b">
    <molecule id="P32742-1"/>
    <property type="protein sequence ID" value="CE31818"/>
    <property type="gene ID" value="WBGene00011299"/>
    <property type="gene designation" value="ikke-1"/>
</dbReference>
<dbReference type="WormBase" id="R107.4c">
    <molecule id="P32742-3"/>
    <property type="protein sequence ID" value="CE31819"/>
    <property type="gene ID" value="WBGene00011299"/>
    <property type="gene designation" value="ikke-1"/>
</dbReference>
<dbReference type="WormBase" id="R107.4d">
    <molecule id="P32742-4"/>
    <property type="protein sequence ID" value="CE37846"/>
    <property type="gene ID" value="WBGene00011299"/>
    <property type="gene designation" value="ikke-1"/>
</dbReference>
<dbReference type="eggNOG" id="KOG4250">
    <property type="taxonomic scope" value="Eukaryota"/>
</dbReference>
<dbReference type="GeneTree" id="ENSGT00970000196625"/>
<dbReference type="InParanoid" id="P32742"/>
<dbReference type="OMA" id="YFCATGK"/>
<dbReference type="OrthoDB" id="10013850at2759"/>
<dbReference type="PhylomeDB" id="P32742"/>
<dbReference type="PRO" id="PR:P32742"/>
<dbReference type="Proteomes" id="UP000001940">
    <property type="component" value="Chromosome III"/>
</dbReference>
<dbReference type="Bgee" id="WBGene00011299">
    <property type="expression patterns" value="Expressed in adult organism and 4 other cell types or tissues"/>
</dbReference>
<dbReference type="GO" id="GO:0005737">
    <property type="term" value="C:cytoplasm"/>
    <property type="evidence" value="ECO:0000314"/>
    <property type="project" value="UniProtKB"/>
</dbReference>
<dbReference type="GO" id="GO:0005524">
    <property type="term" value="F:ATP binding"/>
    <property type="evidence" value="ECO:0007669"/>
    <property type="project" value="UniProtKB-KW"/>
</dbReference>
<dbReference type="GO" id="GO:0106310">
    <property type="term" value="F:protein serine kinase activity"/>
    <property type="evidence" value="ECO:0007669"/>
    <property type="project" value="RHEA"/>
</dbReference>
<dbReference type="GO" id="GO:0004674">
    <property type="term" value="F:protein serine/threonine kinase activity"/>
    <property type="evidence" value="ECO:0000318"/>
    <property type="project" value="GO_Central"/>
</dbReference>
<dbReference type="GO" id="GO:0006914">
    <property type="term" value="P:autophagy"/>
    <property type="evidence" value="ECO:0007669"/>
    <property type="project" value="UniProtKB-KW"/>
</dbReference>
<dbReference type="GO" id="GO:0006468">
    <property type="term" value="P:protein phosphorylation"/>
    <property type="evidence" value="ECO:0000315"/>
    <property type="project" value="UniProtKB"/>
</dbReference>
<dbReference type="GO" id="GO:0010506">
    <property type="term" value="P:regulation of autophagy"/>
    <property type="evidence" value="ECO:0000315"/>
    <property type="project" value="UniProtKB"/>
</dbReference>
<dbReference type="FunFam" id="1.10.510.10:FF:001635">
    <property type="entry name" value="Protein CBR-IKKE-1"/>
    <property type="match status" value="1"/>
</dbReference>
<dbReference type="Gene3D" id="3.30.200.20">
    <property type="entry name" value="Phosphorylase Kinase, domain 1"/>
    <property type="match status" value="1"/>
</dbReference>
<dbReference type="Gene3D" id="1.10.510.10">
    <property type="entry name" value="Transferase(Phosphotransferase) domain 1"/>
    <property type="match status" value="1"/>
</dbReference>
<dbReference type="InterPro" id="IPR011009">
    <property type="entry name" value="Kinase-like_dom_sf"/>
</dbReference>
<dbReference type="InterPro" id="IPR000719">
    <property type="entry name" value="Prot_kinase_dom"/>
</dbReference>
<dbReference type="InterPro" id="IPR017441">
    <property type="entry name" value="Protein_kinase_ATP_BS"/>
</dbReference>
<dbReference type="InterPro" id="IPR008271">
    <property type="entry name" value="Ser/Thr_kinase_AS"/>
</dbReference>
<dbReference type="PANTHER" id="PTHR24359:SF1">
    <property type="entry name" value="INHIBITOR OF NUCLEAR FACTOR KAPPA-B KINASE EPSILON SUBUNIT HOMOLOG 1-RELATED"/>
    <property type="match status" value="1"/>
</dbReference>
<dbReference type="PANTHER" id="PTHR24359">
    <property type="entry name" value="SERINE/THREONINE-PROTEIN KINASE SBK1"/>
    <property type="match status" value="1"/>
</dbReference>
<dbReference type="Pfam" id="PF00069">
    <property type="entry name" value="Pkinase"/>
    <property type="match status" value="1"/>
</dbReference>
<dbReference type="SMART" id="SM00220">
    <property type="entry name" value="S_TKc"/>
    <property type="match status" value="1"/>
</dbReference>
<dbReference type="SUPFAM" id="SSF56112">
    <property type="entry name" value="Protein kinase-like (PK-like)"/>
    <property type="match status" value="1"/>
</dbReference>
<dbReference type="PROSITE" id="PS00107">
    <property type="entry name" value="PROTEIN_KINASE_ATP"/>
    <property type="match status" value="1"/>
</dbReference>
<dbReference type="PROSITE" id="PS50011">
    <property type="entry name" value="PROTEIN_KINASE_DOM"/>
    <property type="match status" value="1"/>
</dbReference>
<dbReference type="PROSITE" id="PS00108">
    <property type="entry name" value="PROTEIN_KINASE_ST"/>
    <property type="match status" value="1"/>
</dbReference>
<proteinExistence type="evidence at protein level"/>